<sequence length="296" mass="32469">MTITASLVKELRQRTSAGMMDCKQALTETNGDMEAAIDLMRTSGAAKATRKAGRITIEGLVKVNISADKKTVTILEVNSETDFVTKGDVFIGFVDMLGTLALKTTPINIEEFLSQTLDNGDSLEKAREDIIAKVGENIAIRRVQTITTNNGVIGTYKHGERIAVVTVLEGGDEVLAKDIAMHIAASKPECISEAELSTDLLEREKAIFVKQAKESEKPDNFIEKIIVGRMKKFVNEITLYGQYFVKDPDTTIGKLVQSNNAQVKSFVRFEVGEGIEKKEENFADEVMAQIQGANTD</sequence>
<protein>
    <recommendedName>
        <fullName evidence="1">Elongation factor Ts</fullName>
        <shortName evidence="1">EF-Ts</shortName>
    </recommendedName>
</protein>
<gene>
    <name evidence="1" type="primary">tsf</name>
    <name type="ordered locus">Rmag_1073</name>
</gene>
<dbReference type="EMBL" id="CP000488">
    <property type="protein sequence ID" value="ABL02777.1"/>
    <property type="molecule type" value="Genomic_DNA"/>
</dbReference>
<dbReference type="RefSeq" id="WP_011738402.1">
    <property type="nucleotide sequence ID" value="NC_008610.1"/>
</dbReference>
<dbReference type="SMR" id="A1AXX0"/>
<dbReference type="STRING" id="413404.Rmag_1073"/>
<dbReference type="KEGG" id="rma:Rmag_1073"/>
<dbReference type="eggNOG" id="COG0264">
    <property type="taxonomic scope" value="Bacteria"/>
</dbReference>
<dbReference type="HOGENOM" id="CLU_047155_0_2_6"/>
<dbReference type="OrthoDB" id="9808348at2"/>
<dbReference type="Proteomes" id="UP000002587">
    <property type="component" value="Chromosome"/>
</dbReference>
<dbReference type="GO" id="GO:0005737">
    <property type="term" value="C:cytoplasm"/>
    <property type="evidence" value="ECO:0007669"/>
    <property type="project" value="UniProtKB-SubCell"/>
</dbReference>
<dbReference type="GO" id="GO:0003746">
    <property type="term" value="F:translation elongation factor activity"/>
    <property type="evidence" value="ECO:0007669"/>
    <property type="project" value="UniProtKB-UniRule"/>
</dbReference>
<dbReference type="CDD" id="cd14275">
    <property type="entry name" value="UBA_EF-Ts"/>
    <property type="match status" value="1"/>
</dbReference>
<dbReference type="FunFam" id="1.10.8.10:FF:000001">
    <property type="entry name" value="Elongation factor Ts"/>
    <property type="match status" value="1"/>
</dbReference>
<dbReference type="Gene3D" id="1.10.286.20">
    <property type="match status" value="1"/>
</dbReference>
<dbReference type="Gene3D" id="1.10.8.10">
    <property type="entry name" value="DNA helicase RuvA subunit, C-terminal domain"/>
    <property type="match status" value="1"/>
</dbReference>
<dbReference type="Gene3D" id="3.30.479.20">
    <property type="entry name" value="Elongation factor Ts, dimerisation domain"/>
    <property type="match status" value="2"/>
</dbReference>
<dbReference type="HAMAP" id="MF_00050">
    <property type="entry name" value="EF_Ts"/>
    <property type="match status" value="1"/>
</dbReference>
<dbReference type="InterPro" id="IPR036402">
    <property type="entry name" value="EF-Ts_dimer_sf"/>
</dbReference>
<dbReference type="InterPro" id="IPR001816">
    <property type="entry name" value="Transl_elong_EFTs/EF1B"/>
</dbReference>
<dbReference type="InterPro" id="IPR014039">
    <property type="entry name" value="Transl_elong_EFTs/EF1B_dimer"/>
</dbReference>
<dbReference type="InterPro" id="IPR018101">
    <property type="entry name" value="Transl_elong_Ts_CS"/>
</dbReference>
<dbReference type="InterPro" id="IPR009060">
    <property type="entry name" value="UBA-like_sf"/>
</dbReference>
<dbReference type="NCBIfam" id="TIGR00116">
    <property type="entry name" value="tsf"/>
    <property type="match status" value="1"/>
</dbReference>
<dbReference type="PANTHER" id="PTHR11741">
    <property type="entry name" value="ELONGATION FACTOR TS"/>
    <property type="match status" value="1"/>
</dbReference>
<dbReference type="PANTHER" id="PTHR11741:SF0">
    <property type="entry name" value="ELONGATION FACTOR TS, MITOCHONDRIAL"/>
    <property type="match status" value="1"/>
</dbReference>
<dbReference type="Pfam" id="PF00889">
    <property type="entry name" value="EF_TS"/>
    <property type="match status" value="1"/>
</dbReference>
<dbReference type="SUPFAM" id="SSF54713">
    <property type="entry name" value="Elongation factor Ts (EF-Ts), dimerisation domain"/>
    <property type="match status" value="2"/>
</dbReference>
<dbReference type="SUPFAM" id="SSF46934">
    <property type="entry name" value="UBA-like"/>
    <property type="match status" value="1"/>
</dbReference>
<dbReference type="PROSITE" id="PS01126">
    <property type="entry name" value="EF_TS_1"/>
    <property type="match status" value="1"/>
</dbReference>
<dbReference type="PROSITE" id="PS01127">
    <property type="entry name" value="EF_TS_2"/>
    <property type="match status" value="1"/>
</dbReference>
<organism>
    <name type="scientific">Ruthia magnifica subsp. Calyptogena magnifica</name>
    <dbReference type="NCBI Taxonomy" id="413404"/>
    <lineage>
        <taxon>Bacteria</taxon>
        <taxon>Pseudomonadati</taxon>
        <taxon>Pseudomonadota</taxon>
        <taxon>Gammaproteobacteria</taxon>
        <taxon>Candidatus Pseudothioglobaceae</taxon>
        <taxon>Candidatus Ruthturnera</taxon>
    </lineage>
</organism>
<proteinExistence type="inferred from homology"/>
<keyword id="KW-0963">Cytoplasm</keyword>
<keyword id="KW-0251">Elongation factor</keyword>
<keyword id="KW-0648">Protein biosynthesis</keyword>
<comment type="function">
    <text evidence="1">Associates with the EF-Tu.GDP complex and induces the exchange of GDP to GTP. It remains bound to the aminoacyl-tRNA.EF-Tu.GTP complex up to the GTP hydrolysis stage on the ribosome.</text>
</comment>
<comment type="subcellular location">
    <subcellularLocation>
        <location evidence="1">Cytoplasm</location>
    </subcellularLocation>
</comment>
<comment type="similarity">
    <text evidence="1">Belongs to the EF-Ts family.</text>
</comment>
<accession>A1AXX0</accession>
<feature type="chain" id="PRO_1000006170" description="Elongation factor Ts">
    <location>
        <begin position="1"/>
        <end position="296"/>
    </location>
</feature>
<feature type="region of interest" description="Involved in Mg(2+) ion dislocation from EF-Tu" evidence="1">
    <location>
        <begin position="81"/>
        <end position="84"/>
    </location>
</feature>
<evidence type="ECO:0000255" key="1">
    <source>
        <dbReference type="HAMAP-Rule" id="MF_00050"/>
    </source>
</evidence>
<reference key="1">
    <citation type="journal article" date="2007" name="Science">
        <title>The Calyptogena magnifica chemoautotrophic symbiont genome.</title>
        <authorList>
            <person name="Newton I.L.G."/>
            <person name="Woyke T."/>
            <person name="Auchtung T.A."/>
            <person name="Dilly G.F."/>
            <person name="Dutton R.J."/>
            <person name="Fisher M.C."/>
            <person name="Fontanez K.M."/>
            <person name="Lau E."/>
            <person name="Stewart F.J."/>
            <person name="Richardson P.M."/>
            <person name="Barry K.W."/>
            <person name="Saunders E."/>
            <person name="Detter J.C."/>
            <person name="Wu D."/>
            <person name="Eisen J.A."/>
            <person name="Cavanaugh C.M."/>
        </authorList>
    </citation>
    <scope>NUCLEOTIDE SEQUENCE [LARGE SCALE GENOMIC DNA]</scope>
</reference>
<name>EFTS_RUTMC</name>